<sequence length="1048" mass="119967">MDITELLQCFACTLDHNAAVRTNAETHLKNASKVPGFLGACLDIIAADEVPENIKLSASLYFKNKITYGWSAGARQGSNELLDSHVDPDEKPVVKDMLIKTMVSVSKTSPRCIRVLKSALTVIISEDYPSKKWGNLLPNSLELLANEDITVTYVGLLCLAEIFRTYRWKNNDERQDLEELILNYFPALLNYGANVLFQDGKYMNNEQIGELVKLIIKIYKFVSYHDLPFTLQRSESFTPWACFFVSIIQQPLPQEVLAISDIEVRSKNPWVKCKKWALANLYRLFQRYASTSLTRKFQYDEFKQMYCEEFLTQFLQVVFDQIEKWGTGQLWLSDECLYYILNFVEQCVVQKTTWKLVGPHYNVILQHVIFPLLKPTAETLEAFDNDPQEYINRNMDFWDVGYSPDLAALALLTTCVTKRGKTTLQPTLEFMVSTLQSAVGDYNNIMLDNALQIESCLRIFSSIIDRLITKDSPFASEMEKFILTYVLPFFKSQYGFLQSRVCDICSKLGSMDFKDPVITSTIYEGVMNCLNNSSNSLPVELTAALALQTFISDDQFNMKLSEHVVPTMQKLLSLSNDFESDVISGVMQDFVEQFAEQLQPFGVELMNTLVQQFLKLAIDLHETSNLDPDSFTNVDSIPDESDKQMAALGILSTTISILLSFENSPEILKNLEQSFYPAAEFILKNDIEDFYRECCEFVENSTFLLRDITPISWKILELIGECNRKPDSMVSYYLSDFMLALNNILIYGRNELKKNEFYTKIIFEIYQKAVTAEDNSLDDLRVVFDLSQELVLALDDSLPQQYRERLLADVVGSILTQKNELKTNVVFSVTAFNVVISNMITEPLITLQYLKQQGCLEIFFQTWITDYIPNYKRCYDIKLSVLALLKIILKLESNDYSVLNLENLVPQLGSIVTQLASRLPTALRQLANQRKEFSSSGFEEDTKWDENFLDVGDDDENDDEGDLTEKYLELIKNRADSLDFVDGYDAKETFDDLEEDPLTGSILDTVDVYKVFKESIANLQHVDSNRYQGILRHLTPADQELFMGIMNA</sequence>
<feature type="chain" id="PRO_0000096880" description="Nonsense-mediated mRNA decay protein 5">
    <location>
        <begin position="1"/>
        <end position="1048"/>
    </location>
</feature>
<feature type="domain" description="Importin N-terminal" evidence="1">
    <location>
        <begin position="24"/>
        <end position="104"/>
    </location>
</feature>
<feature type="modified residue" description="Phosphoserine" evidence="5 6">
    <location>
        <position position="977"/>
    </location>
</feature>
<feature type="sequence conflict" description="In Ref. 2; CAA89663." evidence="4" ref="2">
    <original>A</original>
    <variation>S</variation>
    <location>
        <position position="258"/>
    </location>
</feature>
<feature type="sequence conflict" description="In Ref. 1; AAA74490." evidence="4" ref="1">
    <original>V</original>
    <variation>I</variation>
    <location>
        <position position="517"/>
    </location>
</feature>
<protein>
    <recommendedName>
        <fullName>Nonsense-mediated mRNA decay protein 5</fullName>
    </recommendedName>
    <alternativeName>
        <fullName>Karyopherin-119</fullName>
    </alternativeName>
</protein>
<keyword id="KW-0963">Cytoplasm</keyword>
<keyword id="KW-0539">Nucleus</keyword>
<keyword id="KW-0597">Phosphoprotein</keyword>
<keyword id="KW-0653">Protein transport</keyword>
<keyword id="KW-1185">Reference proteome</keyword>
<keyword id="KW-0813">Transport</keyword>
<comment type="function">
    <text evidence="3">Active in protein import into the nucleus. Its major import substrate is transcription elongation factor TFIIS.</text>
</comment>
<comment type="subunit">
    <text evidence="3">GTP-bound Ran dissociates the isolated NMD5/TFIIS complex.</text>
</comment>
<comment type="subcellular location">
    <subcellularLocation>
        <location>Nucleus</location>
    </subcellularLocation>
    <subcellularLocation>
        <location>Cytoplasm</location>
    </subcellularLocation>
</comment>
<comment type="miscellaneous">
    <text evidence="2">Present with 13500 molecules/cell in log phase SD medium.</text>
</comment>
<proteinExistence type="evidence at protein level"/>
<reference key="1">
    <citation type="submission" date="1995-07" db="EMBL/GenBank/DDBJ databases">
        <authorList>
            <person name="He F."/>
            <person name="Jacobson A."/>
        </authorList>
    </citation>
    <scope>NUCLEOTIDE SEQUENCE [GENOMIC DNA]</scope>
</reference>
<reference key="2">
    <citation type="journal article" date="1996" name="EMBO J.">
        <title>Complete nucleotide sequence of Saccharomyces cerevisiae chromosome X.</title>
        <authorList>
            <person name="Galibert F."/>
            <person name="Alexandraki D."/>
            <person name="Baur A."/>
            <person name="Boles E."/>
            <person name="Chalwatzis N."/>
            <person name="Chuat J.-C."/>
            <person name="Coster F."/>
            <person name="Cziepluch C."/>
            <person name="de Haan M."/>
            <person name="Domdey H."/>
            <person name="Durand P."/>
            <person name="Entian K.-D."/>
            <person name="Gatius M."/>
            <person name="Goffeau A."/>
            <person name="Grivell L.A."/>
            <person name="Hennemann A."/>
            <person name="Herbert C.J."/>
            <person name="Heumann K."/>
            <person name="Hilger F."/>
            <person name="Hollenberg C.P."/>
            <person name="Huang M.-E."/>
            <person name="Jacq C."/>
            <person name="Jauniaux J.-C."/>
            <person name="Katsoulou C."/>
            <person name="Kirchrath L."/>
            <person name="Kleine K."/>
            <person name="Kordes E."/>
            <person name="Koetter P."/>
            <person name="Liebl S."/>
            <person name="Louis E.J."/>
            <person name="Manus V."/>
            <person name="Mewes H.-W."/>
            <person name="Miosga T."/>
            <person name="Obermaier B."/>
            <person name="Perea J."/>
            <person name="Pohl T.M."/>
            <person name="Portetelle D."/>
            <person name="Pujol A."/>
            <person name="Purnelle B."/>
            <person name="Ramezani Rad M."/>
            <person name="Rasmussen S.W."/>
            <person name="Rose M."/>
            <person name="Rossau R."/>
            <person name="Schaaff-Gerstenschlaeger I."/>
            <person name="Smits P.H.M."/>
            <person name="Scarcez T."/>
            <person name="Soriano N."/>
            <person name="To Van D."/>
            <person name="Tzermia M."/>
            <person name="Van Broekhoven A."/>
            <person name="Vandenbol M."/>
            <person name="Wedler H."/>
            <person name="von Wettstein D."/>
            <person name="Wambutt R."/>
            <person name="Zagulski M."/>
            <person name="Zollner A."/>
            <person name="Karpfinger-Hartl L."/>
        </authorList>
    </citation>
    <scope>NUCLEOTIDE SEQUENCE [LARGE SCALE GENOMIC DNA]</scope>
    <source>
        <strain>ATCC 204508 / S288c</strain>
    </source>
</reference>
<reference key="3">
    <citation type="journal article" date="2014" name="G3 (Bethesda)">
        <title>The reference genome sequence of Saccharomyces cerevisiae: Then and now.</title>
        <authorList>
            <person name="Engel S.R."/>
            <person name="Dietrich F.S."/>
            <person name="Fisk D.G."/>
            <person name="Binkley G."/>
            <person name="Balakrishnan R."/>
            <person name="Costanzo M.C."/>
            <person name="Dwight S.S."/>
            <person name="Hitz B.C."/>
            <person name="Karra K."/>
            <person name="Nash R.S."/>
            <person name="Weng S."/>
            <person name="Wong E.D."/>
            <person name="Lloyd P."/>
            <person name="Skrzypek M.S."/>
            <person name="Miyasato S.R."/>
            <person name="Simison M."/>
            <person name="Cherry J.M."/>
        </authorList>
    </citation>
    <scope>GENOME REANNOTATION</scope>
    <scope>SEQUENCE REVISION TO 258</scope>
    <source>
        <strain>ATCC 204508 / S288c</strain>
    </source>
</reference>
<reference key="4">
    <citation type="journal article" date="1998" name="J. Cell Biol.">
        <title>A novel nuclear import pathway for the transcription factor TFIIS.</title>
        <authorList>
            <person name="Albertini M."/>
            <person name="Pemberton L.F."/>
            <person name="Rosenblum J.S."/>
            <person name="Blobel G."/>
        </authorList>
    </citation>
    <scope>FUNCTION</scope>
    <scope>SUBCELLULAR LOCATION</scope>
    <scope>SUBUNIT</scope>
</reference>
<reference key="5">
    <citation type="journal article" date="2003" name="Nature">
        <title>Global analysis of protein localization in budding yeast.</title>
        <authorList>
            <person name="Huh W.-K."/>
            <person name="Falvo J.V."/>
            <person name="Gerke L.C."/>
            <person name="Carroll A.S."/>
            <person name="Howson R.W."/>
            <person name="Weissman J.S."/>
            <person name="O'Shea E.K."/>
        </authorList>
    </citation>
    <scope>SUBCELLULAR LOCATION [LARGE SCALE ANALYSIS]</scope>
</reference>
<reference key="6">
    <citation type="journal article" date="2003" name="Nature">
        <title>Global analysis of protein expression in yeast.</title>
        <authorList>
            <person name="Ghaemmaghami S."/>
            <person name="Huh W.-K."/>
            <person name="Bower K."/>
            <person name="Howson R.W."/>
            <person name="Belle A."/>
            <person name="Dephoure N."/>
            <person name="O'Shea E.K."/>
            <person name="Weissman J.S."/>
        </authorList>
    </citation>
    <scope>LEVEL OF PROTEIN EXPRESSION [LARGE SCALE ANALYSIS]</scope>
</reference>
<reference key="7">
    <citation type="journal article" date="2008" name="Mol. Cell. Proteomics">
        <title>A multidimensional chromatography technology for in-depth phosphoproteome analysis.</title>
        <authorList>
            <person name="Albuquerque C.P."/>
            <person name="Smolka M.B."/>
            <person name="Payne S.H."/>
            <person name="Bafna V."/>
            <person name="Eng J."/>
            <person name="Zhou H."/>
        </authorList>
    </citation>
    <scope>PHOSPHORYLATION [LARGE SCALE ANALYSIS] AT SER-977</scope>
    <scope>IDENTIFICATION BY MASS SPECTROMETRY [LARGE SCALE ANALYSIS]</scope>
</reference>
<reference key="8">
    <citation type="journal article" date="2009" name="Science">
        <title>Global analysis of Cdk1 substrate phosphorylation sites provides insights into evolution.</title>
        <authorList>
            <person name="Holt L.J."/>
            <person name="Tuch B.B."/>
            <person name="Villen J."/>
            <person name="Johnson A.D."/>
            <person name="Gygi S.P."/>
            <person name="Morgan D.O."/>
        </authorList>
    </citation>
    <scope>PHOSPHORYLATION [LARGE SCALE ANALYSIS] AT SER-977</scope>
    <scope>IDENTIFICATION BY MASS SPECTROMETRY [LARGE SCALE ANALYSIS]</scope>
</reference>
<name>NMD5_YEAST</name>
<organism>
    <name type="scientific">Saccharomyces cerevisiae (strain ATCC 204508 / S288c)</name>
    <name type="common">Baker's yeast</name>
    <dbReference type="NCBI Taxonomy" id="559292"/>
    <lineage>
        <taxon>Eukaryota</taxon>
        <taxon>Fungi</taxon>
        <taxon>Dikarya</taxon>
        <taxon>Ascomycota</taxon>
        <taxon>Saccharomycotina</taxon>
        <taxon>Saccharomycetes</taxon>
        <taxon>Saccharomycetales</taxon>
        <taxon>Saccharomycetaceae</taxon>
        <taxon>Saccharomyces</taxon>
    </lineage>
</organism>
<gene>
    <name type="primary">NMD5</name>
    <name type="synonym">KAP119</name>
    <name type="ordered locus">YJR132W</name>
    <name type="ORF">J2112</name>
</gene>
<accession>P46970</accession>
<accession>D6VWV0</accession>
<evidence type="ECO:0000255" key="1">
    <source>
        <dbReference type="PROSITE-ProRule" id="PRU00115"/>
    </source>
</evidence>
<evidence type="ECO:0000269" key="2">
    <source>
    </source>
</evidence>
<evidence type="ECO:0000269" key="3">
    <source>
    </source>
</evidence>
<evidence type="ECO:0000305" key="4"/>
<evidence type="ECO:0007744" key="5">
    <source>
    </source>
</evidence>
<evidence type="ECO:0007744" key="6">
    <source>
    </source>
</evidence>
<dbReference type="EMBL" id="U31375">
    <property type="protein sequence ID" value="AAA74490.1"/>
    <property type="molecule type" value="Genomic_DNA"/>
</dbReference>
<dbReference type="EMBL" id="Z49632">
    <property type="protein sequence ID" value="CAA89663.1"/>
    <property type="molecule type" value="Genomic_DNA"/>
</dbReference>
<dbReference type="EMBL" id="BK006943">
    <property type="protein sequence ID" value="DAA08916.2"/>
    <property type="molecule type" value="Genomic_DNA"/>
</dbReference>
<dbReference type="PIR" id="S57155">
    <property type="entry name" value="S57155"/>
</dbReference>
<dbReference type="RefSeq" id="NP_012666.2">
    <property type="nucleotide sequence ID" value="NM_001181790.2"/>
</dbReference>
<dbReference type="BioGRID" id="33887">
    <property type="interactions" value="96"/>
</dbReference>
<dbReference type="DIP" id="DIP-2326N"/>
<dbReference type="FunCoup" id="P46970">
    <property type="interactions" value="1608"/>
</dbReference>
<dbReference type="IntAct" id="P46970">
    <property type="interactions" value="48"/>
</dbReference>
<dbReference type="MINT" id="P46970"/>
<dbReference type="STRING" id="4932.YJR132W"/>
<dbReference type="iPTMnet" id="P46970"/>
<dbReference type="PaxDb" id="4932-YJR132W"/>
<dbReference type="PeptideAtlas" id="P46970"/>
<dbReference type="EnsemblFungi" id="YJR132W_mRNA">
    <property type="protein sequence ID" value="YJR132W"/>
    <property type="gene ID" value="YJR132W"/>
</dbReference>
<dbReference type="GeneID" id="853596"/>
<dbReference type="KEGG" id="sce:YJR132W"/>
<dbReference type="AGR" id="SGD:S000003893"/>
<dbReference type="SGD" id="S000003893">
    <property type="gene designation" value="NMD5"/>
</dbReference>
<dbReference type="VEuPathDB" id="FungiDB:YJR132W"/>
<dbReference type="eggNOG" id="KOG1991">
    <property type="taxonomic scope" value="Eukaryota"/>
</dbReference>
<dbReference type="HOGENOM" id="CLU_004196_0_0_1"/>
<dbReference type="InParanoid" id="P46970"/>
<dbReference type="OMA" id="WVAKTSW"/>
<dbReference type="OrthoDB" id="760868at2759"/>
<dbReference type="BioCyc" id="YEAST:G3O-31750-MONOMER"/>
<dbReference type="BioGRID-ORCS" id="853596">
    <property type="hits" value="1 hit in 10 CRISPR screens"/>
</dbReference>
<dbReference type="PRO" id="PR:P46970"/>
<dbReference type="Proteomes" id="UP000002311">
    <property type="component" value="Chromosome X"/>
</dbReference>
<dbReference type="RNAct" id="P46970">
    <property type="molecule type" value="protein"/>
</dbReference>
<dbReference type="GO" id="GO:0005737">
    <property type="term" value="C:cytoplasm"/>
    <property type="evidence" value="ECO:0000314"/>
    <property type="project" value="SGD"/>
</dbReference>
<dbReference type="GO" id="GO:0005829">
    <property type="term" value="C:cytosol"/>
    <property type="evidence" value="ECO:0000318"/>
    <property type="project" value="GO_Central"/>
</dbReference>
<dbReference type="GO" id="GO:0005635">
    <property type="term" value="C:nuclear envelope"/>
    <property type="evidence" value="ECO:0000318"/>
    <property type="project" value="GO_Central"/>
</dbReference>
<dbReference type="GO" id="GO:0034399">
    <property type="term" value="C:nuclear periphery"/>
    <property type="evidence" value="ECO:0007005"/>
    <property type="project" value="SGD"/>
</dbReference>
<dbReference type="GO" id="GO:0005634">
    <property type="term" value="C:nucleus"/>
    <property type="evidence" value="ECO:0000314"/>
    <property type="project" value="SGD"/>
</dbReference>
<dbReference type="GO" id="GO:0061608">
    <property type="term" value="F:nuclear import signal receptor activity"/>
    <property type="evidence" value="ECO:0000314"/>
    <property type="project" value="SGD"/>
</dbReference>
<dbReference type="GO" id="GO:0031267">
    <property type="term" value="F:small GTPase binding"/>
    <property type="evidence" value="ECO:0007669"/>
    <property type="project" value="InterPro"/>
</dbReference>
<dbReference type="GO" id="GO:0006606">
    <property type="term" value="P:protein import into nucleus"/>
    <property type="evidence" value="ECO:0000315"/>
    <property type="project" value="SGD"/>
</dbReference>
<dbReference type="FunFam" id="1.25.10.10:FF:000244">
    <property type="entry name" value="Nonsense-mediated mRNA decay protein"/>
    <property type="match status" value="1"/>
</dbReference>
<dbReference type="Gene3D" id="1.25.10.10">
    <property type="entry name" value="Leucine-rich Repeat Variant"/>
    <property type="match status" value="1"/>
</dbReference>
<dbReference type="InterPro" id="IPR011989">
    <property type="entry name" value="ARM-like"/>
</dbReference>
<dbReference type="InterPro" id="IPR016024">
    <property type="entry name" value="ARM-type_fold"/>
</dbReference>
<dbReference type="InterPro" id="IPR001494">
    <property type="entry name" value="Importin-beta_N"/>
</dbReference>
<dbReference type="PANTHER" id="PTHR10997:SF18">
    <property type="entry name" value="D-IMPORTIN 7_RANBP7"/>
    <property type="match status" value="1"/>
</dbReference>
<dbReference type="PANTHER" id="PTHR10997">
    <property type="entry name" value="IMPORTIN-7, 8, 11"/>
    <property type="match status" value="1"/>
</dbReference>
<dbReference type="Pfam" id="PF03810">
    <property type="entry name" value="IBN_N"/>
    <property type="match status" value="1"/>
</dbReference>
<dbReference type="SMART" id="SM00913">
    <property type="entry name" value="IBN_N"/>
    <property type="match status" value="1"/>
</dbReference>
<dbReference type="SUPFAM" id="SSF48371">
    <property type="entry name" value="ARM repeat"/>
    <property type="match status" value="1"/>
</dbReference>
<dbReference type="PROSITE" id="PS50166">
    <property type="entry name" value="IMPORTIN_B_NT"/>
    <property type="match status" value="1"/>
</dbReference>